<name>BLRF2_EBVG</name>
<reference key="1">
    <citation type="journal article" date="2005" name="J. Virol.">
        <title>Genomic sequence analysis of Epstein-Barr virus strain GD1 from a nasopharyngeal carcinoma patient.</title>
        <authorList>
            <person name="Zeng M.-S."/>
            <person name="Li D.-J."/>
            <person name="Liu Q.-L."/>
            <person name="Song L.-B."/>
            <person name="Li M.-Z."/>
            <person name="Zhang R.-H."/>
            <person name="Yu X.-J."/>
            <person name="Wang H.-M."/>
            <person name="Ernberg I."/>
            <person name="Zeng Y.-X."/>
        </authorList>
    </citation>
    <scope>NUCLEOTIDE SEQUENCE [LARGE SCALE GENOMIC DNA]</scope>
</reference>
<keyword id="KW-0175">Coiled coil</keyword>
<keyword id="KW-0238">DNA-binding</keyword>
<keyword id="KW-1035">Host cytoplasm</keyword>
<keyword id="KW-0945">Host-virus interaction</keyword>
<keyword id="KW-1090">Inhibition of host innate immune response by virus</keyword>
<keyword id="KW-0426">Late protein</keyword>
<keyword id="KW-0899">Viral immunoevasion</keyword>
<keyword id="KW-0946">Virion</keyword>
<keyword id="KW-0920">Virion tegument</keyword>
<dbReference type="EMBL" id="AY961628">
    <property type="protein sequence ID" value="AAY41115.1"/>
    <property type="molecule type" value="Genomic_DNA"/>
</dbReference>
<dbReference type="SMR" id="Q3KST5"/>
<dbReference type="IntAct" id="Q3KST5">
    <property type="interactions" value="1"/>
</dbReference>
<dbReference type="Proteomes" id="UP000007641">
    <property type="component" value="Genome"/>
</dbReference>
<dbReference type="GO" id="GO:0030430">
    <property type="term" value="C:host cell cytoplasm"/>
    <property type="evidence" value="ECO:0007669"/>
    <property type="project" value="UniProtKB-SubCell"/>
</dbReference>
<dbReference type="GO" id="GO:0019033">
    <property type="term" value="C:viral tegument"/>
    <property type="evidence" value="ECO:0007669"/>
    <property type="project" value="UniProtKB-SubCell"/>
</dbReference>
<dbReference type="GO" id="GO:0003677">
    <property type="term" value="F:DNA binding"/>
    <property type="evidence" value="ECO:0007669"/>
    <property type="project" value="UniProtKB-KW"/>
</dbReference>
<dbReference type="GO" id="GO:0052170">
    <property type="term" value="P:symbiont-mediated suppression of host innate immune response"/>
    <property type="evidence" value="ECO:0007669"/>
    <property type="project" value="UniProtKB-KW"/>
</dbReference>
<dbReference type="Gene3D" id="1.10.3390.10">
    <property type="entry name" value="YejL-like"/>
    <property type="match status" value="1"/>
</dbReference>
<dbReference type="InterPro" id="IPR008642">
    <property type="entry name" value="Herpes_BLRF2"/>
</dbReference>
<dbReference type="Pfam" id="PF05812">
    <property type="entry name" value="Herpes_BLRF2"/>
    <property type="match status" value="1"/>
</dbReference>
<dbReference type="SUPFAM" id="SSF160459">
    <property type="entry name" value="BLRF2-like"/>
    <property type="match status" value="1"/>
</dbReference>
<organism>
    <name type="scientific">Epstein-Barr virus (strain GD1)</name>
    <name type="common">HHV-4</name>
    <name type="synonym">Human gammaherpesvirus 4</name>
    <dbReference type="NCBI Taxonomy" id="10376"/>
    <lineage>
        <taxon>Viruses</taxon>
        <taxon>Duplodnaviria</taxon>
        <taxon>Heunggongvirae</taxon>
        <taxon>Peploviricota</taxon>
        <taxon>Herviviricetes</taxon>
        <taxon>Herpesvirales</taxon>
        <taxon>Orthoherpesviridae</taxon>
        <taxon>Gammaherpesvirinae</taxon>
        <taxon>Lymphocryptovirus</taxon>
        <taxon>Lymphocryptovirus humangamma4</taxon>
    </lineage>
</organism>
<feature type="chain" id="PRO_0000376064" description="Tegument protein BLRF2">
    <location>
        <begin position="1"/>
        <end position="162"/>
    </location>
</feature>
<feature type="region of interest" description="Disordered" evidence="5">
    <location>
        <begin position="121"/>
        <end position="162"/>
    </location>
</feature>
<feature type="coiled-coil region" evidence="4">
    <location>
        <begin position="12"/>
        <end position="43"/>
    </location>
</feature>
<feature type="compositionally biased region" description="Basic and acidic residues" evidence="5">
    <location>
        <begin position="151"/>
        <end position="162"/>
    </location>
</feature>
<organismHost>
    <name type="scientific">Homo sapiens</name>
    <name type="common">Human</name>
    <dbReference type="NCBI Taxonomy" id="9606"/>
</organismHost>
<accession>Q3KST5</accession>
<evidence type="ECO:0000250" key="1">
    <source>
        <dbReference type="UniProtKB" id="P03197"/>
    </source>
</evidence>
<evidence type="ECO:0000250" key="2">
    <source>
        <dbReference type="UniProtKB" id="P0C717"/>
    </source>
</evidence>
<evidence type="ECO:0000250" key="3">
    <source>
        <dbReference type="UniProtKB" id="Q2HR80"/>
    </source>
</evidence>
<evidence type="ECO:0000255" key="4"/>
<evidence type="ECO:0000256" key="5">
    <source>
        <dbReference type="SAM" id="MobiDB-lite"/>
    </source>
</evidence>
<evidence type="ECO:0000305" key="6"/>
<sequence>MSAPRKVRLPSVKAVDMSMEDMAARLARLESENKALKQQVLRGGACASSTSVPSAPVPPPEPLTARQREVMITQATGRLASQAMKKIEDKVRKSVDGVTTRNEMENILQNLTLRIQVSMLGAKGQPSPGEGTRLRESNDPNATRRARSRSRGREAKKVQISD</sequence>
<protein>
    <recommendedName>
        <fullName>Tegument protein BLRF2</fullName>
    </recommendedName>
</protein>
<proteinExistence type="evidence at protein level"/>
<comment type="function">
    <text evidence="3">Plays a role in the inhibition of host innate immune system by targeting the CGAS enzymatic activity which is the principal cytosolic DNA sensor that detects invading viral DNA. Acts by inhibiting CGAS-DNA phase separation: directly binds double-stranded DNA (dsDNA) in a length dependent but sequence independent manner and is able to form DNA-induced phase separation in infected cells. DNA phase separation of ORF52 mediates disruption of liquid-like droplets in which CGAS is activated, thereby preventing CGAS activity.</text>
</comment>
<comment type="subunit">
    <text evidence="3">Homooligomer; homooligomerizes and binds double-stranded DNA (dsDNA) cooperatively (By similarity). Interacts with host CGAS (By similarity).</text>
</comment>
<comment type="interaction">
    <interactant intactId="EBI-2621066">
        <id>Q3KST5</id>
    </interactant>
    <interactant intactId="EBI-2621061">
        <id>Q66542</id>
        <label>BNRF1</label>
    </interactant>
    <organismsDiffer>false</organismsDiffer>
    <experiments>2</experiments>
</comment>
<comment type="subcellular location">
    <subcellularLocation>
        <location evidence="1">Virion tegument</location>
    </subcellularLocation>
    <subcellularLocation>
        <location evidence="2">Host cytoplasm</location>
    </subcellularLocation>
</comment>
<comment type="similarity">
    <text evidence="6">Belongs to the herpesviridae BLRF2 family.</text>
</comment>
<gene>
    <name type="ORF">BLRF2</name>
</gene>